<proteinExistence type="inferred from homology"/>
<feature type="chain" id="PRO_1000185636" description="Putative multidrug resistance protein MdtD">
    <location>
        <begin position="1"/>
        <end position="471"/>
    </location>
</feature>
<feature type="topological domain" description="Periplasmic" evidence="1">
    <location>
        <begin position="1"/>
        <end position="11"/>
    </location>
</feature>
<feature type="transmembrane region" description="Helical" evidence="1">
    <location>
        <begin position="12"/>
        <end position="32"/>
    </location>
</feature>
<feature type="topological domain" description="Cytoplasmic" evidence="1">
    <location>
        <begin position="33"/>
        <end position="48"/>
    </location>
</feature>
<feature type="transmembrane region" description="Helical" evidence="1">
    <location>
        <begin position="49"/>
        <end position="69"/>
    </location>
</feature>
<feature type="topological domain" description="Periplasmic" evidence="1">
    <location>
        <begin position="70"/>
        <end position="76"/>
    </location>
</feature>
<feature type="transmembrane region" description="Helical" evidence="1">
    <location>
        <begin position="77"/>
        <end position="97"/>
    </location>
</feature>
<feature type="topological domain" description="Cytoplasmic" evidence="1">
    <location>
        <begin position="98"/>
        <end position="101"/>
    </location>
</feature>
<feature type="transmembrane region" description="Helical" evidence="1">
    <location>
        <begin position="102"/>
        <end position="124"/>
    </location>
</feature>
<feature type="topological domain" description="Periplasmic" evidence="1">
    <location>
        <begin position="125"/>
        <end position="137"/>
    </location>
</feature>
<feature type="transmembrane region" description="Helical" evidence="1">
    <location>
        <begin position="138"/>
        <end position="158"/>
    </location>
</feature>
<feature type="topological domain" description="Cytoplasmic" evidence="1">
    <location>
        <begin position="159"/>
        <end position="164"/>
    </location>
</feature>
<feature type="transmembrane region" description="Helical" evidence="1">
    <location>
        <begin position="165"/>
        <end position="185"/>
    </location>
</feature>
<feature type="topological domain" description="Periplasmic" evidence="1">
    <location>
        <begin position="186"/>
        <end position="196"/>
    </location>
</feature>
<feature type="transmembrane region" description="Helical" evidence="1">
    <location>
        <begin position="197"/>
        <end position="217"/>
    </location>
</feature>
<feature type="topological domain" description="Cytoplasmic" evidence="1">
    <location>
        <begin position="218"/>
        <end position="224"/>
    </location>
</feature>
<feature type="transmembrane region" description="Helical" evidence="1">
    <location>
        <begin position="225"/>
        <end position="245"/>
    </location>
</feature>
<feature type="topological domain" description="Periplasmic" evidence="1">
    <location>
        <begin position="246"/>
        <end position="262"/>
    </location>
</feature>
<feature type="transmembrane region" description="Helical" evidence="1">
    <location>
        <begin position="263"/>
        <end position="283"/>
    </location>
</feature>
<feature type="topological domain" description="Cytoplasmic" evidence="1">
    <location>
        <begin position="284"/>
        <end position="285"/>
    </location>
</feature>
<feature type="transmembrane region" description="Helical" evidence="1">
    <location>
        <begin position="286"/>
        <end position="306"/>
    </location>
</feature>
<feature type="topological domain" description="Periplasmic" evidence="1">
    <location>
        <begin position="307"/>
        <end position="341"/>
    </location>
</feature>
<feature type="transmembrane region" description="Helical" evidence="1">
    <location>
        <begin position="342"/>
        <end position="362"/>
    </location>
</feature>
<feature type="topological domain" description="Cytoplasmic" evidence="1">
    <location>
        <begin position="363"/>
        <end position="395"/>
    </location>
</feature>
<feature type="transmembrane region" description="Helical" evidence="1">
    <location>
        <begin position="396"/>
        <end position="416"/>
    </location>
</feature>
<feature type="topological domain" description="Periplasmic" evidence="1">
    <location>
        <begin position="417"/>
        <end position="430"/>
    </location>
</feature>
<feature type="transmembrane region" description="Helical" evidence="1">
    <location>
        <begin position="431"/>
        <end position="451"/>
    </location>
</feature>
<feature type="topological domain" description="Cytoplasmic" evidence="1">
    <location>
        <begin position="452"/>
        <end position="471"/>
    </location>
</feature>
<gene>
    <name evidence="1" type="primary">mdtD</name>
    <name type="ordered locus">ECED1_2423</name>
</gene>
<organism>
    <name type="scientific">Escherichia coli O81 (strain ED1a)</name>
    <dbReference type="NCBI Taxonomy" id="585397"/>
    <lineage>
        <taxon>Bacteria</taxon>
        <taxon>Pseudomonadati</taxon>
        <taxon>Pseudomonadota</taxon>
        <taxon>Gammaproteobacteria</taxon>
        <taxon>Enterobacterales</taxon>
        <taxon>Enterobacteriaceae</taxon>
        <taxon>Escherichia</taxon>
    </lineage>
</organism>
<name>MDTD_ECO81</name>
<sequence>MTDLPDSTRWQLWIVAFGFFMQSLDTTIVNTALPSMAQSLGESPLHMHMVIVSYVLTVAVMLPASGWLADKVGVRNIFFTAIVLFTLGSLFCALSGTLNELLLARALQGVGGAMMVPVGRLTVMKIVPREQYMAAMTFVTLPGQIGPLLGPALGGLLVEYASWHWIFLINIPVGIIGAIATLMLMPNYTMQTRRFDLSGFLLLAVGMAVLTLALDGSKGTGFSPLAIAGLVAVGVVALVLYLLHAQNNNRALFSLKLFRTRTFSLGLAGSFAGRIGSGMLPFMTPVFLQIGLGFSPFHAGLMMIPMVLGSMGMKRIVVQVVNRFGYRWVLVATTLGLSLVTLLFMTTALLGWYYVLPFVLFLQGMVNSTRFSSMNTLTLKDLPDNLASSGNSLLSMIMQLSMSIGVTIAGLLLGLFGSQHVSVDSGTTQTVFMYTWLSMAFIIALPAFVFARVPSDTHQNVAISRRKRSAQ</sequence>
<protein>
    <recommendedName>
        <fullName evidence="1">Putative multidrug resistance protein MdtD</fullName>
    </recommendedName>
</protein>
<evidence type="ECO:0000255" key="1">
    <source>
        <dbReference type="HAMAP-Rule" id="MF_01577"/>
    </source>
</evidence>
<dbReference type="EMBL" id="CU928162">
    <property type="protein sequence ID" value="CAR08606.2"/>
    <property type="molecule type" value="Genomic_DNA"/>
</dbReference>
<dbReference type="RefSeq" id="WP_000130830.1">
    <property type="nucleotide sequence ID" value="NC_011745.1"/>
</dbReference>
<dbReference type="SMR" id="B7MWZ0"/>
<dbReference type="KEGG" id="ecq:ECED1_2423"/>
<dbReference type="HOGENOM" id="CLU_000960_28_0_6"/>
<dbReference type="Proteomes" id="UP000000748">
    <property type="component" value="Chromosome"/>
</dbReference>
<dbReference type="GO" id="GO:0005886">
    <property type="term" value="C:plasma membrane"/>
    <property type="evidence" value="ECO:0007669"/>
    <property type="project" value="UniProtKB-SubCell"/>
</dbReference>
<dbReference type="GO" id="GO:0022857">
    <property type="term" value="F:transmembrane transporter activity"/>
    <property type="evidence" value="ECO:0007669"/>
    <property type="project" value="UniProtKB-UniRule"/>
</dbReference>
<dbReference type="CDD" id="cd17503">
    <property type="entry name" value="MFS_LmrB_MDR_like"/>
    <property type="match status" value="1"/>
</dbReference>
<dbReference type="FunFam" id="1.20.1250.20:FF:000021">
    <property type="entry name" value="Putative multidrug resistance protein MdtD"/>
    <property type="match status" value="1"/>
</dbReference>
<dbReference type="FunFam" id="1.20.1720.10:FF:000001">
    <property type="entry name" value="Putative multidrug resistance protein MdtD"/>
    <property type="match status" value="1"/>
</dbReference>
<dbReference type="Gene3D" id="1.20.1250.20">
    <property type="entry name" value="MFS general substrate transporter like domains"/>
    <property type="match status" value="1"/>
</dbReference>
<dbReference type="Gene3D" id="1.20.1720.10">
    <property type="entry name" value="Multidrug resistance protein D"/>
    <property type="match status" value="1"/>
</dbReference>
<dbReference type="HAMAP" id="MF_01577">
    <property type="entry name" value="MFS_MdtD"/>
    <property type="match status" value="1"/>
</dbReference>
<dbReference type="InterPro" id="IPR004638">
    <property type="entry name" value="EmrB-like"/>
</dbReference>
<dbReference type="InterPro" id="IPR011701">
    <property type="entry name" value="MFS"/>
</dbReference>
<dbReference type="InterPro" id="IPR020846">
    <property type="entry name" value="MFS_dom"/>
</dbReference>
<dbReference type="InterPro" id="IPR036259">
    <property type="entry name" value="MFS_trans_sf"/>
</dbReference>
<dbReference type="InterPro" id="IPR023721">
    <property type="entry name" value="Multi-R_MdtD"/>
</dbReference>
<dbReference type="NCBIfam" id="TIGR00711">
    <property type="entry name" value="efflux_EmrB"/>
    <property type="match status" value="1"/>
</dbReference>
<dbReference type="NCBIfam" id="NF007799">
    <property type="entry name" value="PRK10504.1"/>
    <property type="match status" value="1"/>
</dbReference>
<dbReference type="PANTHER" id="PTHR42718:SF46">
    <property type="entry name" value="BLR6921 PROTEIN"/>
    <property type="match status" value="1"/>
</dbReference>
<dbReference type="PANTHER" id="PTHR42718">
    <property type="entry name" value="MAJOR FACILITATOR SUPERFAMILY MULTIDRUG TRANSPORTER MFSC"/>
    <property type="match status" value="1"/>
</dbReference>
<dbReference type="Pfam" id="PF07690">
    <property type="entry name" value="MFS_1"/>
    <property type="match status" value="1"/>
</dbReference>
<dbReference type="PRINTS" id="PR01036">
    <property type="entry name" value="TCRTETB"/>
</dbReference>
<dbReference type="SUPFAM" id="SSF103473">
    <property type="entry name" value="MFS general substrate transporter"/>
    <property type="match status" value="1"/>
</dbReference>
<dbReference type="PROSITE" id="PS50850">
    <property type="entry name" value="MFS"/>
    <property type="match status" value="1"/>
</dbReference>
<reference key="1">
    <citation type="journal article" date="2009" name="PLoS Genet.">
        <title>Organised genome dynamics in the Escherichia coli species results in highly diverse adaptive paths.</title>
        <authorList>
            <person name="Touchon M."/>
            <person name="Hoede C."/>
            <person name="Tenaillon O."/>
            <person name="Barbe V."/>
            <person name="Baeriswyl S."/>
            <person name="Bidet P."/>
            <person name="Bingen E."/>
            <person name="Bonacorsi S."/>
            <person name="Bouchier C."/>
            <person name="Bouvet O."/>
            <person name="Calteau A."/>
            <person name="Chiapello H."/>
            <person name="Clermont O."/>
            <person name="Cruveiller S."/>
            <person name="Danchin A."/>
            <person name="Diard M."/>
            <person name="Dossat C."/>
            <person name="Karoui M.E."/>
            <person name="Frapy E."/>
            <person name="Garry L."/>
            <person name="Ghigo J.M."/>
            <person name="Gilles A.M."/>
            <person name="Johnson J."/>
            <person name="Le Bouguenec C."/>
            <person name="Lescat M."/>
            <person name="Mangenot S."/>
            <person name="Martinez-Jehanne V."/>
            <person name="Matic I."/>
            <person name="Nassif X."/>
            <person name="Oztas S."/>
            <person name="Petit M.A."/>
            <person name="Pichon C."/>
            <person name="Rouy Z."/>
            <person name="Ruf C.S."/>
            <person name="Schneider D."/>
            <person name="Tourret J."/>
            <person name="Vacherie B."/>
            <person name="Vallenet D."/>
            <person name="Medigue C."/>
            <person name="Rocha E.P.C."/>
            <person name="Denamur E."/>
        </authorList>
    </citation>
    <scope>NUCLEOTIDE SEQUENCE [LARGE SCALE GENOMIC DNA]</scope>
    <source>
        <strain>ED1a</strain>
    </source>
</reference>
<keyword id="KW-0997">Cell inner membrane</keyword>
<keyword id="KW-1003">Cell membrane</keyword>
<keyword id="KW-0472">Membrane</keyword>
<keyword id="KW-0812">Transmembrane</keyword>
<keyword id="KW-1133">Transmembrane helix</keyword>
<keyword id="KW-0813">Transport</keyword>
<accession>B7MWZ0</accession>
<comment type="subcellular location">
    <subcellularLocation>
        <location evidence="1">Cell inner membrane</location>
        <topology evidence="1">Multi-pass membrane protein</topology>
    </subcellularLocation>
</comment>
<comment type="similarity">
    <text evidence="1">Belongs to the major facilitator superfamily. TCR/Tet family.</text>
</comment>